<gene>
    <name type="primary">Prorsd1</name>
    <name type="synonym">Prdxdd1</name>
</gene>
<keyword id="KW-0002">3D-structure</keyword>
<keyword id="KW-0025">Alternative splicing</keyword>
<keyword id="KW-1185">Reference proteome</keyword>
<organism>
    <name type="scientific">Mus musculus</name>
    <name type="common">Mouse</name>
    <dbReference type="NCBI Taxonomy" id="10090"/>
    <lineage>
        <taxon>Eukaryota</taxon>
        <taxon>Metazoa</taxon>
        <taxon>Chordata</taxon>
        <taxon>Craniata</taxon>
        <taxon>Vertebrata</taxon>
        <taxon>Euteleostomi</taxon>
        <taxon>Mammalia</taxon>
        <taxon>Eutheria</taxon>
        <taxon>Euarchontoglires</taxon>
        <taxon>Glires</taxon>
        <taxon>Rodentia</taxon>
        <taxon>Myomorpha</taxon>
        <taxon>Muroidea</taxon>
        <taxon>Muridae</taxon>
        <taxon>Murinae</taxon>
        <taxon>Mus</taxon>
        <taxon>Mus</taxon>
    </lineage>
</organism>
<sequence length="169" mass="18862">MAGSELRAELEQRLGALAIRTEVVEHPEVFTIEEMMPHIQHLKGAHSKNLFLKDKKKKNYWLVTVLHDRQINLNDLGKQLGVGSGNLRFADETAMLEKLKVGQGCATPLSLFCDDGDVKFVLDSAFLEGGHEKVYFHPMTNAATMGLSPEDFLIFVKATGHDPIILNFD</sequence>
<proteinExistence type="evidence at protein level"/>
<comment type="alternative products">
    <event type="alternative splicing"/>
    <isoform>
        <id>Q9D820-1</id>
        <name>1</name>
        <sequence type="displayed"/>
    </isoform>
    <isoform>
        <id>Q9D820-2</id>
        <name>2</name>
        <sequence type="described" ref="VSP_032962"/>
    </isoform>
</comment>
<comment type="similarity">
    <text evidence="3">Belongs to the PRORSD1 family.</text>
</comment>
<comment type="sequence caution" evidence="3">
    <conflict type="erroneous gene model prediction">
        <sequence resource="EMBL-CDS" id="CAI36003"/>
    </conflict>
</comment>
<name>PRXD1_MOUSE</name>
<feature type="chain" id="PRO_0000329287" description="Prolyl-tRNA synthetase associated domain-containing protein 1">
    <location>
        <begin position="1"/>
        <end position="169"/>
    </location>
</feature>
<feature type="splice variant" id="VSP_032962" description="In isoform 2." evidence="1 2">
    <location>
        <begin position="1"/>
        <end position="34"/>
    </location>
</feature>
<protein>
    <recommendedName>
        <fullName>Prolyl-tRNA synthetase associated domain-containing protein 1</fullName>
    </recommendedName>
    <alternativeName>
        <fullName>PrdX deacylase domain-containing protein 1</fullName>
    </alternativeName>
</protein>
<dbReference type="EMBL" id="AK008574">
    <property type="protein sequence ID" value="BAB25753.1"/>
    <property type="molecule type" value="mRNA"/>
</dbReference>
<dbReference type="EMBL" id="AK077280">
    <property type="protein sequence ID" value="BAC36727.1"/>
    <property type="molecule type" value="mRNA"/>
</dbReference>
<dbReference type="EMBL" id="AK085965">
    <property type="protein sequence ID" value="BAC39579.1"/>
    <property type="molecule type" value="mRNA"/>
</dbReference>
<dbReference type="EMBL" id="BX284634">
    <property type="protein sequence ID" value="CAI36004.1"/>
    <property type="molecule type" value="Genomic_DNA"/>
</dbReference>
<dbReference type="EMBL" id="BX284634">
    <property type="protein sequence ID" value="CAI36003.2"/>
    <property type="status" value="ALT_SEQ"/>
    <property type="molecule type" value="Genomic_DNA"/>
</dbReference>
<dbReference type="EMBL" id="BC033930">
    <property type="protein sequence ID" value="AAH33930.1"/>
    <property type="molecule type" value="mRNA"/>
</dbReference>
<dbReference type="EMBL" id="BC115900">
    <property type="protein sequence ID" value="AAI15901.1"/>
    <property type="molecule type" value="mRNA"/>
</dbReference>
<dbReference type="CCDS" id="CCDS24495.1">
    <molecule id="Q9D820-1"/>
</dbReference>
<dbReference type="RefSeq" id="NP_001156926.1">
    <property type="nucleotide sequence ID" value="NM_001163454.2"/>
</dbReference>
<dbReference type="RefSeq" id="NP_080741.1">
    <molecule id="Q9D820-1"/>
    <property type="nucleotide sequence ID" value="NM_026465.3"/>
</dbReference>
<dbReference type="PDB" id="8HUZ">
    <property type="method" value="X-ray"/>
    <property type="resolution" value="3.30 A"/>
    <property type="chains" value="A/B/C/D/E/F=1-169"/>
</dbReference>
<dbReference type="PDBsum" id="8HUZ"/>
<dbReference type="SMR" id="Q9D820"/>
<dbReference type="FunCoup" id="Q9D820">
    <property type="interactions" value="2"/>
</dbReference>
<dbReference type="STRING" id="10090.ENSMUSP00000048099"/>
<dbReference type="iPTMnet" id="Q9D820"/>
<dbReference type="PhosphoSitePlus" id="Q9D820"/>
<dbReference type="jPOST" id="Q9D820"/>
<dbReference type="PaxDb" id="10090-ENSMUSP00000048099"/>
<dbReference type="PeptideAtlas" id="Q9D820"/>
<dbReference type="ProteomicsDB" id="291758">
    <molecule id="Q9D820-1"/>
</dbReference>
<dbReference type="ProteomicsDB" id="291759">
    <molecule id="Q9D820-2"/>
</dbReference>
<dbReference type="Pumba" id="Q9D820"/>
<dbReference type="DNASU" id="67939"/>
<dbReference type="Ensembl" id="ENSMUST00000039900.4">
    <molecule id="Q9D820-1"/>
    <property type="protein sequence ID" value="ENSMUSP00000048099.4"/>
    <property type="gene ID" value="ENSMUSG00000032673.6"/>
</dbReference>
<dbReference type="GeneID" id="67939"/>
<dbReference type="KEGG" id="mmu:67939"/>
<dbReference type="UCSC" id="uc007igz.2">
    <molecule id="Q9D820-1"/>
    <property type="organism name" value="mouse"/>
</dbReference>
<dbReference type="AGR" id="MGI:1915189"/>
<dbReference type="CTD" id="67939"/>
<dbReference type="MGI" id="MGI:1915189">
    <property type="gene designation" value="Prorsd1"/>
</dbReference>
<dbReference type="VEuPathDB" id="HostDB:ENSMUSG00000032673"/>
<dbReference type="eggNOG" id="ENOG502QT6S">
    <property type="taxonomic scope" value="Eukaryota"/>
</dbReference>
<dbReference type="GeneTree" id="ENSGT00440000033965"/>
<dbReference type="HOGENOM" id="CLU_104635_2_1_1"/>
<dbReference type="InParanoid" id="Q9D820"/>
<dbReference type="OMA" id="CVDHPPV"/>
<dbReference type="OrthoDB" id="424586at2759"/>
<dbReference type="PhylomeDB" id="Q9D820"/>
<dbReference type="TreeFam" id="TF329697"/>
<dbReference type="BioGRID-ORCS" id="67939">
    <property type="hits" value="4 hits in 73 CRISPR screens"/>
</dbReference>
<dbReference type="ChiTaRS" id="Prorsd1">
    <property type="organism name" value="mouse"/>
</dbReference>
<dbReference type="PRO" id="PR:Q9D820"/>
<dbReference type="Proteomes" id="UP000000589">
    <property type="component" value="Chromosome 11"/>
</dbReference>
<dbReference type="RNAct" id="Q9D820">
    <property type="molecule type" value="protein"/>
</dbReference>
<dbReference type="Bgee" id="ENSMUSG00000032673">
    <property type="expression patterns" value="Expressed in lobe of prostate and 217 other cell types or tissues"/>
</dbReference>
<dbReference type="ExpressionAtlas" id="Q9D820">
    <property type="expression patterns" value="baseline and differential"/>
</dbReference>
<dbReference type="GO" id="GO:0002161">
    <property type="term" value="F:aminoacyl-tRNA deacylase activity"/>
    <property type="evidence" value="ECO:0007669"/>
    <property type="project" value="InterPro"/>
</dbReference>
<dbReference type="CDD" id="cd04335">
    <property type="entry name" value="PrdX_deacylase"/>
    <property type="match status" value="1"/>
</dbReference>
<dbReference type="FunFam" id="3.90.960.10:FF:000005">
    <property type="entry name" value="Putative prolyl-tRNA synthetase"/>
    <property type="match status" value="1"/>
</dbReference>
<dbReference type="Gene3D" id="3.90.960.10">
    <property type="entry name" value="YbaK/aminoacyl-tRNA synthetase-associated domain"/>
    <property type="match status" value="1"/>
</dbReference>
<dbReference type="InterPro" id="IPR040285">
    <property type="entry name" value="ProX/PRXD1"/>
</dbReference>
<dbReference type="InterPro" id="IPR036754">
    <property type="entry name" value="YbaK/aa-tRNA-synt-asso_dom_sf"/>
</dbReference>
<dbReference type="InterPro" id="IPR007214">
    <property type="entry name" value="YbaK/aa-tRNA-synth-assoc-dom"/>
</dbReference>
<dbReference type="PANTHER" id="PTHR31423:SF3">
    <property type="entry name" value="PROLYL-TRNA SYNTHETASE ASSOCIATED DOMAIN-CONTAINING PROTEIN 1-RELATED"/>
    <property type="match status" value="1"/>
</dbReference>
<dbReference type="PANTHER" id="PTHR31423">
    <property type="entry name" value="YBAK DOMAIN-CONTAINING PROTEIN"/>
    <property type="match status" value="1"/>
</dbReference>
<dbReference type="Pfam" id="PF04073">
    <property type="entry name" value="tRNA_edit"/>
    <property type="match status" value="1"/>
</dbReference>
<dbReference type="SUPFAM" id="SSF55826">
    <property type="entry name" value="YbaK/ProRS associated domain"/>
    <property type="match status" value="1"/>
</dbReference>
<accession>Q9D820</accession>
<accession>Q8BFX7</accession>
<reference key="1">
    <citation type="journal article" date="2005" name="Science">
        <title>The transcriptional landscape of the mammalian genome.</title>
        <authorList>
            <person name="Carninci P."/>
            <person name="Kasukawa T."/>
            <person name="Katayama S."/>
            <person name="Gough J."/>
            <person name="Frith M.C."/>
            <person name="Maeda N."/>
            <person name="Oyama R."/>
            <person name="Ravasi T."/>
            <person name="Lenhard B."/>
            <person name="Wells C."/>
            <person name="Kodzius R."/>
            <person name="Shimokawa K."/>
            <person name="Bajic V.B."/>
            <person name="Brenner S.E."/>
            <person name="Batalov S."/>
            <person name="Forrest A.R."/>
            <person name="Zavolan M."/>
            <person name="Davis M.J."/>
            <person name="Wilming L.G."/>
            <person name="Aidinis V."/>
            <person name="Allen J.E."/>
            <person name="Ambesi-Impiombato A."/>
            <person name="Apweiler R."/>
            <person name="Aturaliya R.N."/>
            <person name="Bailey T.L."/>
            <person name="Bansal M."/>
            <person name="Baxter L."/>
            <person name="Beisel K.W."/>
            <person name="Bersano T."/>
            <person name="Bono H."/>
            <person name="Chalk A.M."/>
            <person name="Chiu K.P."/>
            <person name="Choudhary V."/>
            <person name="Christoffels A."/>
            <person name="Clutterbuck D.R."/>
            <person name="Crowe M.L."/>
            <person name="Dalla E."/>
            <person name="Dalrymple B.P."/>
            <person name="de Bono B."/>
            <person name="Della Gatta G."/>
            <person name="di Bernardo D."/>
            <person name="Down T."/>
            <person name="Engstrom P."/>
            <person name="Fagiolini M."/>
            <person name="Faulkner G."/>
            <person name="Fletcher C.F."/>
            <person name="Fukushima T."/>
            <person name="Furuno M."/>
            <person name="Futaki S."/>
            <person name="Gariboldi M."/>
            <person name="Georgii-Hemming P."/>
            <person name="Gingeras T.R."/>
            <person name="Gojobori T."/>
            <person name="Green R.E."/>
            <person name="Gustincich S."/>
            <person name="Harbers M."/>
            <person name="Hayashi Y."/>
            <person name="Hensch T.K."/>
            <person name="Hirokawa N."/>
            <person name="Hill D."/>
            <person name="Huminiecki L."/>
            <person name="Iacono M."/>
            <person name="Ikeo K."/>
            <person name="Iwama A."/>
            <person name="Ishikawa T."/>
            <person name="Jakt M."/>
            <person name="Kanapin A."/>
            <person name="Katoh M."/>
            <person name="Kawasawa Y."/>
            <person name="Kelso J."/>
            <person name="Kitamura H."/>
            <person name="Kitano H."/>
            <person name="Kollias G."/>
            <person name="Krishnan S.P."/>
            <person name="Kruger A."/>
            <person name="Kummerfeld S.K."/>
            <person name="Kurochkin I.V."/>
            <person name="Lareau L.F."/>
            <person name="Lazarevic D."/>
            <person name="Lipovich L."/>
            <person name="Liu J."/>
            <person name="Liuni S."/>
            <person name="McWilliam S."/>
            <person name="Madan Babu M."/>
            <person name="Madera M."/>
            <person name="Marchionni L."/>
            <person name="Matsuda H."/>
            <person name="Matsuzawa S."/>
            <person name="Miki H."/>
            <person name="Mignone F."/>
            <person name="Miyake S."/>
            <person name="Morris K."/>
            <person name="Mottagui-Tabar S."/>
            <person name="Mulder N."/>
            <person name="Nakano N."/>
            <person name="Nakauchi H."/>
            <person name="Ng P."/>
            <person name="Nilsson R."/>
            <person name="Nishiguchi S."/>
            <person name="Nishikawa S."/>
            <person name="Nori F."/>
            <person name="Ohara O."/>
            <person name="Okazaki Y."/>
            <person name="Orlando V."/>
            <person name="Pang K.C."/>
            <person name="Pavan W.J."/>
            <person name="Pavesi G."/>
            <person name="Pesole G."/>
            <person name="Petrovsky N."/>
            <person name="Piazza S."/>
            <person name="Reed J."/>
            <person name="Reid J.F."/>
            <person name="Ring B.Z."/>
            <person name="Ringwald M."/>
            <person name="Rost B."/>
            <person name="Ruan Y."/>
            <person name="Salzberg S.L."/>
            <person name="Sandelin A."/>
            <person name="Schneider C."/>
            <person name="Schoenbach C."/>
            <person name="Sekiguchi K."/>
            <person name="Semple C.A."/>
            <person name="Seno S."/>
            <person name="Sessa L."/>
            <person name="Sheng Y."/>
            <person name="Shibata Y."/>
            <person name="Shimada H."/>
            <person name="Shimada K."/>
            <person name="Silva D."/>
            <person name="Sinclair B."/>
            <person name="Sperling S."/>
            <person name="Stupka E."/>
            <person name="Sugiura K."/>
            <person name="Sultana R."/>
            <person name="Takenaka Y."/>
            <person name="Taki K."/>
            <person name="Tammoja K."/>
            <person name="Tan S.L."/>
            <person name="Tang S."/>
            <person name="Taylor M.S."/>
            <person name="Tegner J."/>
            <person name="Teichmann S.A."/>
            <person name="Ueda H.R."/>
            <person name="van Nimwegen E."/>
            <person name="Verardo R."/>
            <person name="Wei C.L."/>
            <person name="Yagi K."/>
            <person name="Yamanishi H."/>
            <person name="Zabarovsky E."/>
            <person name="Zhu S."/>
            <person name="Zimmer A."/>
            <person name="Hide W."/>
            <person name="Bult C."/>
            <person name="Grimmond S.M."/>
            <person name="Teasdale R.D."/>
            <person name="Liu E.T."/>
            <person name="Brusic V."/>
            <person name="Quackenbush J."/>
            <person name="Wahlestedt C."/>
            <person name="Mattick J.S."/>
            <person name="Hume D.A."/>
            <person name="Kai C."/>
            <person name="Sasaki D."/>
            <person name="Tomaru Y."/>
            <person name="Fukuda S."/>
            <person name="Kanamori-Katayama M."/>
            <person name="Suzuki M."/>
            <person name="Aoki J."/>
            <person name="Arakawa T."/>
            <person name="Iida J."/>
            <person name="Imamura K."/>
            <person name="Itoh M."/>
            <person name="Kato T."/>
            <person name="Kawaji H."/>
            <person name="Kawagashira N."/>
            <person name="Kawashima T."/>
            <person name="Kojima M."/>
            <person name="Kondo S."/>
            <person name="Konno H."/>
            <person name="Nakano K."/>
            <person name="Ninomiya N."/>
            <person name="Nishio T."/>
            <person name="Okada M."/>
            <person name="Plessy C."/>
            <person name="Shibata K."/>
            <person name="Shiraki T."/>
            <person name="Suzuki S."/>
            <person name="Tagami M."/>
            <person name="Waki K."/>
            <person name="Watahiki A."/>
            <person name="Okamura-Oho Y."/>
            <person name="Suzuki H."/>
            <person name="Kawai J."/>
            <person name="Hayashizaki Y."/>
        </authorList>
    </citation>
    <scope>NUCLEOTIDE SEQUENCE [LARGE SCALE MRNA] (ISOFORMS 1 AND 2)</scope>
    <source>
        <strain>C57BL/6J</strain>
        <tissue>Heart</tissue>
        <tissue>Ovary</tissue>
        <tissue>Small intestine</tissue>
        <tissue>Uterus</tissue>
    </source>
</reference>
<reference key="2">
    <citation type="journal article" date="2009" name="PLoS Biol.">
        <title>Lineage-specific biology revealed by a finished genome assembly of the mouse.</title>
        <authorList>
            <person name="Church D.M."/>
            <person name="Goodstadt L."/>
            <person name="Hillier L.W."/>
            <person name="Zody M.C."/>
            <person name="Goldstein S."/>
            <person name="She X."/>
            <person name="Bult C.J."/>
            <person name="Agarwala R."/>
            <person name="Cherry J.L."/>
            <person name="DiCuccio M."/>
            <person name="Hlavina W."/>
            <person name="Kapustin Y."/>
            <person name="Meric P."/>
            <person name="Maglott D."/>
            <person name="Birtle Z."/>
            <person name="Marques A.C."/>
            <person name="Graves T."/>
            <person name="Zhou S."/>
            <person name="Teague B."/>
            <person name="Potamousis K."/>
            <person name="Churas C."/>
            <person name="Place M."/>
            <person name="Herschleb J."/>
            <person name="Runnheim R."/>
            <person name="Forrest D."/>
            <person name="Amos-Landgraf J."/>
            <person name="Schwartz D.C."/>
            <person name="Cheng Z."/>
            <person name="Lindblad-Toh K."/>
            <person name="Eichler E.E."/>
            <person name="Ponting C.P."/>
        </authorList>
    </citation>
    <scope>NUCLEOTIDE SEQUENCE [LARGE SCALE GENOMIC DNA]</scope>
    <source>
        <strain>C57BL/6J</strain>
    </source>
</reference>
<reference key="3">
    <citation type="journal article" date="2004" name="Genome Res.">
        <title>The status, quality, and expansion of the NIH full-length cDNA project: the Mammalian Gene Collection (MGC).</title>
        <authorList>
            <consortium name="The MGC Project Team"/>
        </authorList>
    </citation>
    <scope>NUCLEOTIDE SEQUENCE [LARGE SCALE MRNA] (ISOFORMS 1 AND 2)</scope>
    <source>
        <strain>C57BL/6J</strain>
        <tissue>Mammary gland</tissue>
    </source>
</reference>
<reference key="4">
    <citation type="journal article" date="2010" name="Cell">
        <title>A tissue-specific atlas of mouse protein phosphorylation and expression.</title>
        <authorList>
            <person name="Huttlin E.L."/>
            <person name="Jedrychowski M.P."/>
            <person name="Elias J.E."/>
            <person name="Goswami T."/>
            <person name="Rad R."/>
            <person name="Beausoleil S.A."/>
            <person name="Villen J."/>
            <person name="Haas W."/>
            <person name="Sowa M.E."/>
            <person name="Gygi S.P."/>
        </authorList>
    </citation>
    <scope>IDENTIFICATION BY MASS SPECTROMETRY [LARGE SCALE ANALYSIS]</scope>
    <source>
        <tissue>Brain</tissue>
        <tissue>Brown adipose tissue</tissue>
        <tissue>Heart</tissue>
        <tissue>Kidney</tissue>
        <tissue>Liver</tissue>
        <tissue>Lung</tissue>
        <tissue>Pancreas</tissue>
        <tissue>Spleen</tissue>
        <tissue>Testis</tissue>
    </source>
</reference>
<evidence type="ECO:0000303" key="1">
    <source>
    </source>
</evidence>
<evidence type="ECO:0000303" key="2">
    <source>
    </source>
</evidence>
<evidence type="ECO:0000305" key="3"/>